<comment type="function">
    <text evidence="1">Protease that specifically cleaves 'Lys-48'-linked polyubiquitin chains. Deubiquitinating enzyme associated with the 19S regulatory subunit of the 26S proteasome. Putative regulatory component of the INO80 complex; however is inactive in the INO80 complex and is activated by a transient interaction of the INO80 complex with the proteasome via ADRM1 (By similarity).</text>
</comment>
<comment type="catalytic activity">
    <reaction>
        <text>Thiol-dependent hydrolysis of ester, thioester, amide, peptide and isopeptide bonds formed by the C-terminal Gly of ubiquitin (a 76-residue protein attached to proteins as an intracellular targeting signal).</text>
        <dbReference type="EC" id="3.4.19.12"/>
    </reaction>
</comment>
<comment type="activity regulation">
    <text evidence="1">Activated by ADRM1. Inhibited by interaction with NFRKB (By similarity).</text>
</comment>
<comment type="subunit">
    <text evidence="1">Component of the 19S (PA700) regulatory complex of the 26S proteasome. Interacts with ADRM1 and NFRKB. Component of the INO80 complex; specifically part of a complex module associated with N-terminus of INO80 (By similarity).</text>
</comment>
<comment type="subcellular location">
    <subcellularLocation>
        <location evidence="1">Cytoplasm</location>
    </subcellularLocation>
    <subcellularLocation>
        <location evidence="1">Nucleus</location>
    </subcellularLocation>
    <text evidence="1">Associates with the proteasome 19S subunit in the cytoplasm. Associates with the INO80 complex in the nucleus (By similarity).</text>
</comment>
<comment type="alternative products">
    <event type="alternative splicing"/>
    <isoform>
        <id>Q9WUP7-1</id>
        <name>1</name>
        <sequence type="displayed"/>
    </isoform>
    <isoform>
        <id>Q9WUP7-2</id>
        <name>2</name>
        <sequence type="described" ref="VSP_005255"/>
    </isoform>
</comment>
<comment type="similarity">
    <text evidence="7">Belongs to the peptidase C12 family.</text>
</comment>
<gene>
    <name type="primary">Uchl5</name>
    <name type="synonym">Uch37</name>
</gene>
<feature type="chain" id="PRO_0000211067" description="Ubiquitin carboxyl-terminal hydrolase isozyme L5">
    <location>
        <begin position="1"/>
        <end position="329"/>
    </location>
</feature>
<feature type="domain" description="UCH catalytic" evidence="2">
    <location>
        <begin position="7"/>
        <end position="225"/>
    </location>
</feature>
<feature type="domain" description="ULD" evidence="3">
    <location>
        <begin position="291"/>
        <end position="319"/>
    </location>
</feature>
<feature type="region of interest" description="Interaction with ADRM1" evidence="1">
    <location>
        <begin position="313"/>
        <end position="329"/>
    </location>
</feature>
<feature type="active site" description="Nucleophile" evidence="2">
    <location>
        <position position="88"/>
    </location>
</feature>
<feature type="active site" description="Proton donor" evidence="2">
    <location>
        <position position="164"/>
    </location>
</feature>
<feature type="site" description="Transition state stabilizer" evidence="2">
    <location>
        <position position="82"/>
    </location>
</feature>
<feature type="site" description="Important for enzyme activity" evidence="2">
    <location>
        <position position="179"/>
    </location>
</feature>
<feature type="modified residue" description="N6-succinyllysine" evidence="8">
    <location>
        <position position="47"/>
    </location>
</feature>
<feature type="modified residue" description="N6-acetyllysine" evidence="8">
    <location>
        <position position="158"/>
    </location>
</feature>
<feature type="modified residue" description="N6-succinyllysine" evidence="8">
    <location>
        <position position="289"/>
    </location>
</feature>
<feature type="splice variant" id="VSP_005255" description="In isoform 2." evidence="4 5 6">
    <location>
        <position position="246"/>
    </location>
</feature>
<feature type="sequence conflict" description="In Ref. 1; AAD31534." evidence="7" ref="1">
    <original>E</original>
    <variation>K</variation>
    <location>
        <position position="20"/>
    </location>
</feature>
<feature type="sequence conflict" description="In Ref. 1; AAD31534." evidence="7" ref="1">
    <original>G</original>
    <variation>R</variation>
    <location>
        <position position="24"/>
    </location>
</feature>
<feature type="sequence conflict" description="In Ref. 1; BAB25312." evidence="7" ref="1">
    <original>D</original>
    <variation>E</variation>
    <location>
        <position position="104"/>
    </location>
</feature>
<feature type="helix" evidence="10">
    <location>
        <begin position="15"/>
        <end position="24"/>
    </location>
</feature>
<feature type="strand" evidence="10">
    <location>
        <begin position="28"/>
        <end position="34"/>
    </location>
</feature>
<feature type="helix" evidence="10">
    <location>
        <begin position="41"/>
        <end position="44"/>
    </location>
</feature>
<feature type="strand" evidence="10">
    <location>
        <begin position="48"/>
        <end position="57"/>
    </location>
</feature>
<feature type="strand" evidence="10">
    <location>
        <begin position="65"/>
        <end position="68"/>
    </location>
</feature>
<feature type="helix" evidence="10">
    <location>
        <begin position="72"/>
        <end position="75"/>
    </location>
</feature>
<feature type="helix" evidence="9">
    <location>
        <begin position="85"/>
        <end position="87"/>
    </location>
</feature>
<feature type="helix" evidence="10">
    <location>
        <begin position="88"/>
        <end position="97"/>
    </location>
</feature>
<feature type="helix" evidence="10">
    <location>
        <begin position="108"/>
        <end position="118"/>
    </location>
</feature>
<feature type="helix" evidence="10">
    <location>
        <begin position="123"/>
        <end position="131"/>
    </location>
</feature>
<feature type="helix" evidence="10">
    <location>
        <begin position="134"/>
        <end position="142"/>
    </location>
</feature>
<feature type="strand" evidence="10">
    <location>
        <begin position="163"/>
        <end position="171"/>
    </location>
</feature>
<feature type="strand" evidence="10">
    <location>
        <begin position="174"/>
        <end position="178"/>
    </location>
</feature>
<feature type="strand" evidence="10">
    <location>
        <begin position="182"/>
        <end position="184"/>
    </location>
</feature>
<feature type="strand" evidence="10">
    <location>
        <begin position="186"/>
        <end position="190"/>
    </location>
</feature>
<feature type="strand" evidence="9">
    <location>
        <begin position="193"/>
        <end position="195"/>
    </location>
</feature>
<feature type="helix" evidence="10">
    <location>
        <begin position="197"/>
        <end position="209"/>
    </location>
</feature>
<feature type="strand" evidence="10">
    <location>
        <begin position="219"/>
        <end position="225"/>
    </location>
</feature>
<feature type="helix" evidence="10">
    <location>
        <begin position="227"/>
        <end position="244"/>
    </location>
</feature>
<feature type="helix" evidence="10">
    <location>
        <begin position="256"/>
        <end position="289"/>
    </location>
</feature>
<feature type="helix" evidence="10">
    <location>
        <begin position="293"/>
        <end position="305"/>
    </location>
</feature>
<feature type="helix" evidence="10">
    <location>
        <begin position="309"/>
        <end position="318"/>
    </location>
</feature>
<name>UCHL5_MOUSE</name>
<sequence>MSSNAGEWCLMESDPGVFTELIKGFGCRGAQVEEIWSLEPESFEKLKPVHGLIFLFKWQPGEEPAGSVVQDSRLETIFFAKQVINNACATQAIVSVLLNCTHQDVHLGETLSEFKEFSQSFDAAMKGLALSNSDVIRQVHNSFARQQMFEFDTKTPAKEEDAFHFVSYVPVNGRLYELDGLREGPIDLGACNQDDWITAVRPVIEKRIQKYSEGEIRFNLMAIVSDRKMIYEQKIAELQRQLAEEEPMDTDQGSTVLSAIQSEVARNQMLIEEEVQKLKRYKIENIRRKHNYLPFIMELLKTLAEHQQLIPLVEKAKEKQNAKKAQETK</sequence>
<evidence type="ECO:0000250" key="1"/>
<evidence type="ECO:0000255" key="2">
    <source>
        <dbReference type="PROSITE-ProRule" id="PRU01393"/>
    </source>
</evidence>
<evidence type="ECO:0000255" key="3">
    <source>
        <dbReference type="PROSITE-ProRule" id="PRU01394"/>
    </source>
</evidence>
<evidence type="ECO:0000303" key="4">
    <source>
    </source>
</evidence>
<evidence type="ECO:0000303" key="5">
    <source>
    </source>
</evidence>
<evidence type="ECO:0000303" key="6">
    <source ref="2"/>
</evidence>
<evidence type="ECO:0000305" key="7"/>
<evidence type="ECO:0007744" key="8">
    <source>
    </source>
</evidence>
<evidence type="ECO:0007829" key="9">
    <source>
        <dbReference type="PDB" id="4WLQ"/>
    </source>
</evidence>
<evidence type="ECO:0007829" key="10">
    <source>
        <dbReference type="PDB" id="4WLR"/>
    </source>
</evidence>
<dbReference type="EC" id="3.4.19.12"/>
<dbReference type="EMBL" id="AF148447">
    <property type="protein sequence ID" value="AAD31534.1"/>
    <property type="molecule type" value="mRNA"/>
</dbReference>
<dbReference type="EMBL" id="AF175903">
    <property type="protein sequence ID" value="AAD50311.1"/>
    <property type="molecule type" value="mRNA"/>
</dbReference>
<dbReference type="EMBL" id="AK017925">
    <property type="protein sequence ID" value="BAB31005.1"/>
    <property type="molecule type" value="mRNA"/>
</dbReference>
<dbReference type="EMBL" id="AK011117">
    <property type="protein sequence ID" value="BAB27412.1"/>
    <property type="molecule type" value="mRNA"/>
</dbReference>
<dbReference type="EMBL" id="AK007860">
    <property type="protein sequence ID" value="BAB25312.1"/>
    <property type="molecule type" value="mRNA"/>
</dbReference>
<dbReference type="EMBL" id="BC006891">
    <property type="protein sequence ID" value="AAH06891.1"/>
    <property type="molecule type" value="mRNA"/>
</dbReference>
<dbReference type="CCDS" id="CCDS15346.1">
    <molecule id="Q9WUP7-1"/>
</dbReference>
<dbReference type="CCDS" id="CCDS78699.1">
    <molecule id="Q9WUP7-2"/>
</dbReference>
<dbReference type="RefSeq" id="NP_001153338.1">
    <molecule id="Q9WUP7-2"/>
    <property type="nucleotide sequence ID" value="NM_001159866.1"/>
</dbReference>
<dbReference type="RefSeq" id="NP_062508.2">
    <molecule id="Q9WUP7-1"/>
    <property type="nucleotide sequence ID" value="NM_019562.2"/>
</dbReference>
<dbReference type="PDB" id="4WLQ">
    <property type="method" value="X-ray"/>
    <property type="resolution" value="2.85 A"/>
    <property type="chains" value="A=1-329"/>
</dbReference>
<dbReference type="PDB" id="4WLR">
    <property type="method" value="X-ray"/>
    <property type="resolution" value="2.00 A"/>
    <property type="chains" value="A=1-329"/>
</dbReference>
<dbReference type="PDBsum" id="4WLQ"/>
<dbReference type="PDBsum" id="4WLR"/>
<dbReference type="SMR" id="Q9WUP7"/>
<dbReference type="BioGRID" id="207842">
    <property type="interactions" value="85"/>
</dbReference>
<dbReference type="ComplexPortal" id="CPX-878">
    <property type="entry name" value="INO80 chromatin remodeling complex"/>
</dbReference>
<dbReference type="FunCoup" id="Q9WUP7">
    <property type="interactions" value="4703"/>
</dbReference>
<dbReference type="IntAct" id="Q9WUP7">
    <property type="interactions" value="3"/>
</dbReference>
<dbReference type="MINT" id="Q9WUP7"/>
<dbReference type="STRING" id="10090.ENSMUSP00000140106"/>
<dbReference type="MEROPS" id="C12.005"/>
<dbReference type="GlyGen" id="Q9WUP7">
    <property type="glycosylation" value="1 site, 1 O-linked glycan (1 site)"/>
</dbReference>
<dbReference type="iPTMnet" id="Q9WUP7"/>
<dbReference type="PhosphoSitePlus" id="Q9WUP7"/>
<dbReference type="SwissPalm" id="Q9WUP7"/>
<dbReference type="REPRODUCTION-2DPAGE" id="Q9WUP7"/>
<dbReference type="PaxDb" id="10090-ENSMUSP00000140106"/>
<dbReference type="PeptideAtlas" id="Q9WUP7"/>
<dbReference type="ProteomicsDB" id="298115">
    <molecule id="Q9WUP7-1"/>
</dbReference>
<dbReference type="ProteomicsDB" id="298116">
    <molecule id="Q9WUP7-2"/>
</dbReference>
<dbReference type="Pumba" id="Q9WUP7"/>
<dbReference type="Antibodypedia" id="1573">
    <property type="antibodies" value="333 antibodies from 30 providers"/>
</dbReference>
<dbReference type="DNASU" id="56207"/>
<dbReference type="Ensembl" id="ENSMUST00000018333.13">
    <molecule id="Q9WUP7-2"/>
    <property type="protein sequence ID" value="ENSMUSP00000018333.8"/>
    <property type="gene ID" value="ENSMUSG00000018189.13"/>
</dbReference>
<dbReference type="Ensembl" id="ENSMUST00000189936.7">
    <molecule id="Q9WUP7-1"/>
    <property type="protein sequence ID" value="ENSMUSP00000140106.2"/>
    <property type="gene ID" value="ENSMUSG00000018189.13"/>
</dbReference>
<dbReference type="GeneID" id="56207"/>
<dbReference type="KEGG" id="mmu:56207"/>
<dbReference type="UCSC" id="uc007cxe.2">
    <molecule id="Q9WUP7-1"/>
    <property type="organism name" value="mouse"/>
</dbReference>
<dbReference type="UCSC" id="uc007cxf.2">
    <molecule id="Q9WUP7-2"/>
    <property type="organism name" value="mouse"/>
</dbReference>
<dbReference type="AGR" id="MGI:1914848"/>
<dbReference type="CTD" id="51377"/>
<dbReference type="MGI" id="MGI:1914848">
    <property type="gene designation" value="Uchl5"/>
</dbReference>
<dbReference type="VEuPathDB" id="HostDB:ENSMUSG00000018189"/>
<dbReference type="eggNOG" id="KOG2778">
    <property type="taxonomic scope" value="Eukaryota"/>
</dbReference>
<dbReference type="GeneTree" id="ENSGT00940000155195"/>
<dbReference type="HOGENOM" id="CLU_018316_0_0_1"/>
<dbReference type="InParanoid" id="Q9WUP7"/>
<dbReference type="OMA" id="YIQYEIQ"/>
<dbReference type="OrthoDB" id="1924260at2759"/>
<dbReference type="PhylomeDB" id="Q9WUP7"/>
<dbReference type="TreeFam" id="TF313976"/>
<dbReference type="Reactome" id="R-MMU-5689603">
    <property type="pathway name" value="UCH proteinases"/>
</dbReference>
<dbReference type="BioGRID-ORCS" id="56207">
    <property type="hits" value="9 hits in 118 CRISPR screens"/>
</dbReference>
<dbReference type="ChiTaRS" id="Uchl5">
    <property type="organism name" value="mouse"/>
</dbReference>
<dbReference type="EvolutionaryTrace" id="Q9WUP7"/>
<dbReference type="PRO" id="PR:Q9WUP7"/>
<dbReference type="Proteomes" id="UP000000589">
    <property type="component" value="Chromosome 1"/>
</dbReference>
<dbReference type="RNAct" id="Q9WUP7">
    <property type="molecule type" value="protein"/>
</dbReference>
<dbReference type="Bgee" id="ENSMUSG00000018189">
    <property type="expression patterns" value="Expressed in blastoderm cell in morula and 284 other cell types or tissues"/>
</dbReference>
<dbReference type="ExpressionAtlas" id="Q9WUP7">
    <property type="expression patterns" value="baseline and differential"/>
</dbReference>
<dbReference type="GO" id="GO:0005829">
    <property type="term" value="C:cytosol"/>
    <property type="evidence" value="ECO:0000250"/>
    <property type="project" value="UniProtKB"/>
</dbReference>
<dbReference type="GO" id="GO:0031011">
    <property type="term" value="C:Ino80 complex"/>
    <property type="evidence" value="ECO:0000266"/>
    <property type="project" value="ComplexPortal"/>
</dbReference>
<dbReference type="GO" id="GO:0005730">
    <property type="term" value="C:nucleolus"/>
    <property type="evidence" value="ECO:0007669"/>
    <property type="project" value="Ensembl"/>
</dbReference>
<dbReference type="GO" id="GO:0005654">
    <property type="term" value="C:nucleoplasm"/>
    <property type="evidence" value="ECO:0007669"/>
    <property type="project" value="Ensembl"/>
</dbReference>
<dbReference type="GO" id="GO:0005634">
    <property type="term" value="C:nucleus"/>
    <property type="evidence" value="ECO:0000250"/>
    <property type="project" value="UniProtKB"/>
</dbReference>
<dbReference type="GO" id="GO:0000502">
    <property type="term" value="C:proteasome complex"/>
    <property type="evidence" value="ECO:0007669"/>
    <property type="project" value="UniProtKB-KW"/>
</dbReference>
<dbReference type="GO" id="GO:0004843">
    <property type="term" value="F:cysteine-type deubiquitinase activity"/>
    <property type="evidence" value="ECO:0000250"/>
    <property type="project" value="UniProtKB"/>
</dbReference>
<dbReference type="GO" id="GO:0004866">
    <property type="term" value="F:endopeptidase inhibitor activity"/>
    <property type="evidence" value="ECO:0007669"/>
    <property type="project" value="Ensembl"/>
</dbReference>
<dbReference type="GO" id="GO:0070628">
    <property type="term" value="F:proteasome binding"/>
    <property type="evidence" value="ECO:0007669"/>
    <property type="project" value="Ensembl"/>
</dbReference>
<dbReference type="GO" id="GO:0006338">
    <property type="term" value="P:chromatin remodeling"/>
    <property type="evidence" value="ECO:0000266"/>
    <property type="project" value="ComplexPortal"/>
</dbReference>
<dbReference type="GO" id="GO:0006310">
    <property type="term" value="P:DNA recombination"/>
    <property type="evidence" value="ECO:0007669"/>
    <property type="project" value="UniProtKB-KW"/>
</dbReference>
<dbReference type="GO" id="GO:0006281">
    <property type="term" value="P:DNA repair"/>
    <property type="evidence" value="ECO:0007669"/>
    <property type="project" value="UniProtKB-KW"/>
</dbReference>
<dbReference type="GO" id="GO:0048853">
    <property type="term" value="P:forebrain morphogenesis"/>
    <property type="evidence" value="ECO:0000315"/>
    <property type="project" value="BHF-UCL"/>
</dbReference>
<dbReference type="GO" id="GO:0021670">
    <property type="term" value="P:lateral ventricle development"/>
    <property type="evidence" value="ECO:0000315"/>
    <property type="project" value="BHF-UCL"/>
</dbReference>
<dbReference type="GO" id="GO:0030901">
    <property type="term" value="P:midbrain development"/>
    <property type="evidence" value="ECO:0000315"/>
    <property type="project" value="BHF-UCL"/>
</dbReference>
<dbReference type="GO" id="GO:0032435">
    <property type="term" value="P:negative regulation of proteasomal ubiquitin-dependent protein catabolic process"/>
    <property type="evidence" value="ECO:0007669"/>
    <property type="project" value="Ensembl"/>
</dbReference>
<dbReference type="GO" id="GO:0045739">
    <property type="term" value="P:positive regulation of DNA repair"/>
    <property type="evidence" value="ECO:0000314"/>
    <property type="project" value="ComplexPortal"/>
</dbReference>
<dbReference type="GO" id="GO:0045893">
    <property type="term" value="P:positive regulation of DNA-templated transcription"/>
    <property type="evidence" value="ECO:0000266"/>
    <property type="project" value="ComplexPortal"/>
</dbReference>
<dbReference type="GO" id="GO:0045880">
    <property type="term" value="P:positive regulation of smoothened signaling pathway"/>
    <property type="evidence" value="ECO:0007669"/>
    <property type="project" value="Ensembl"/>
</dbReference>
<dbReference type="GO" id="GO:1904507">
    <property type="term" value="P:positive regulation of telomere maintenance in response to DNA damage"/>
    <property type="evidence" value="ECO:0000315"/>
    <property type="project" value="ComplexPortal"/>
</dbReference>
<dbReference type="GO" id="GO:0016579">
    <property type="term" value="P:protein deubiquitination"/>
    <property type="evidence" value="ECO:0000250"/>
    <property type="project" value="UniProtKB"/>
</dbReference>
<dbReference type="GO" id="GO:0051726">
    <property type="term" value="P:regulation of cell cycle"/>
    <property type="evidence" value="ECO:0000266"/>
    <property type="project" value="ComplexPortal"/>
</dbReference>
<dbReference type="GO" id="GO:0033044">
    <property type="term" value="P:regulation of chromosome organization"/>
    <property type="evidence" value="ECO:0000266"/>
    <property type="project" value="ComplexPortal"/>
</dbReference>
<dbReference type="GO" id="GO:0006282">
    <property type="term" value="P:regulation of DNA repair"/>
    <property type="evidence" value="ECO:0000314"/>
    <property type="project" value="ComplexPortal"/>
</dbReference>
<dbReference type="GO" id="GO:0006275">
    <property type="term" value="P:regulation of DNA replication"/>
    <property type="evidence" value="ECO:0000266"/>
    <property type="project" value="ComplexPortal"/>
</dbReference>
<dbReference type="GO" id="GO:0060382">
    <property type="term" value="P:regulation of DNA strand elongation"/>
    <property type="evidence" value="ECO:0000266"/>
    <property type="project" value="ComplexPortal"/>
</dbReference>
<dbReference type="GO" id="GO:0045995">
    <property type="term" value="P:regulation of embryonic development"/>
    <property type="evidence" value="ECO:0000315"/>
    <property type="project" value="ComplexPortal"/>
</dbReference>
<dbReference type="GO" id="GO:0000723">
    <property type="term" value="P:telomere maintenance"/>
    <property type="evidence" value="ECO:0000315"/>
    <property type="project" value="ComplexPortal"/>
</dbReference>
<dbReference type="GO" id="GO:0006511">
    <property type="term" value="P:ubiquitin-dependent protein catabolic process"/>
    <property type="evidence" value="ECO:0007669"/>
    <property type="project" value="InterPro"/>
</dbReference>
<dbReference type="CDD" id="cd02255">
    <property type="entry name" value="Peptidase_C12"/>
    <property type="match status" value="1"/>
</dbReference>
<dbReference type="DisProt" id="DP01190">
    <molecule id="Q9WUP7-2"/>
</dbReference>
<dbReference type="FunFam" id="3.40.532.10:FF:000001">
    <property type="entry name" value="Ubiquitin carboxyl-terminal hydrolase"/>
    <property type="match status" value="1"/>
</dbReference>
<dbReference type="FunFam" id="1.20.58.860:FF:000009">
    <property type="entry name" value="Ubiquitin carboxyl-terminal hydrolase isozyme L5"/>
    <property type="match status" value="1"/>
</dbReference>
<dbReference type="Gene3D" id="1.20.58.860">
    <property type="match status" value="1"/>
</dbReference>
<dbReference type="Gene3D" id="3.40.532.10">
    <property type="entry name" value="Peptidase C12, ubiquitin carboxyl-terminal hydrolase"/>
    <property type="match status" value="1"/>
</dbReference>
<dbReference type="InterPro" id="IPR038765">
    <property type="entry name" value="Papain-like_cys_pep_sf"/>
</dbReference>
<dbReference type="InterPro" id="IPR001578">
    <property type="entry name" value="Peptidase_C12_UCH"/>
</dbReference>
<dbReference type="InterPro" id="IPR036959">
    <property type="entry name" value="Peptidase_C12_UCH_sf"/>
</dbReference>
<dbReference type="InterPro" id="IPR017390">
    <property type="entry name" value="Ubiquitinyl_hydrolase_UCH37"/>
</dbReference>
<dbReference type="InterPro" id="IPR033837">
    <property type="entry name" value="UCH37"/>
</dbReference>
<dbReference type="InterPro" id="IPR041507">
    <property type="entry name" value="UCH_C"/>
</dbReference>
<dbReference type="PANTHER" id="PTHR10589">
    <property type="entry name" value="UBIQUITIN CARBOXYL-TERMINAL HYDROLASE"/>
    <property type="match status" value="1"/>
</dbReference>
<dbReference type="PANTHER" id="PTHR10589:SF16">
    <property type="entry name" value="UBIQUITIN CARBOXYL-TERMINAL HYDROLASE ISOZYME L5"/>
    <property type="match status" value="1"/>
</dbReference>
<dbReference type="Pfam" id="PF01088">
    <property type="entry name" value="Peptidase_C12"/>
    <property type="match status" value="1"/>
</dbReference>
<dbReference type="Pfam" id="PF18031">
    <property type="entry name" value="UCH_C"/>
    <property type="match status" value="1"/>
</dbReference>
<dbReference type="PIRSF" id="PIRSF038120">
    <property type="entry name" value="Ubiquitinyl_hydrolase_UCH37"/>
    <property type="match status" value="1"/>
</dbReference>
<dbReference type="PRINTS" id="PR00707">
    <property type="entry name" value="UBCTHYDRLASE"/>
</dbReference>
<dbReference type="SUPFAM" id="SSF54001">
    <property type="entry name" value="Cysteine proteinases"/>
    <property type="match status" value="1"/>
</dbReference>
<dbReference type="PROSITE" id="PS52048">
    <property type="entry name" value="UCH_DOMAIN"/>
    <property type="match status" value="1"/>
</dbReference>
<dbReference type="PROSITE" id="PS52049">
    <property type="entry name" value="ULD"/>
    <property type="match status" value="1"/>
</dbReference>
<accession>Q9WUP7</accession>
<accession>Q9CVJ4</accession>
<accession>Q9CXZ3</accession>
<accession>Q9R107</accession>
<protein>
    <recommendedName>
        <fullName>Ubiquitin carboxyl-terminal hydrolase isozyme L5</fullName>
        <shortName>UCH-L5</shortName>
        <ecNumber>3.4.19.12</ecNumber>
    </recommendedName>
    <alternativeName>
        <fullName>Ubiquitin C-terminal hydrolase UCH37</fullName>
    </alternativeName>
    <alternativeName>
        <fullName>Ubiquitin thioesterase L5</fullName>
    </alternativeName>
</protein>
<reference key="1">
    <citation type="submission" date="1999-05" db="EMBL/GenBank/DDBJ databases">
        <authorList>
            <person name="Xu W."/>
            <person name="DeMartino G.N."/>
            <person name="Slaughter C.A."/>
            <person name="Cohen R.E."/>
        </authorList>
    </citation>
    <scope>NUCLEOTIDE SEQUENCE [MRNA] (ISOFORM 1)</scope>
</reference>
<reference key="2">
    <citation type="submission" date="1999-08" db="EMBL/GenBank/DDBJ databases">
        <title>Identification of a novel mouse ubiquitin C-terminal hydrolase: cloning, expression and functional characterization.</title>
        <authorList>
            <person name="Li T.W."/>
            <person name="Sun B."/>
            <person name="Mustafa F.B."/>
            <person name="Lee M.K."/>
            <person name="Teo T.S."/>
        </authorList>
    </citation>
    <scope>NUCLEOTIDE SEQUENCE [MRNA] (ISOFORM 2)</scope>
</reference>
<reference key="3">
    <citation type="journal article" date="2005" name="Science">
        <title>The transcriptional landscape of the mammalian genome.</title>
        <authorList>
            <person name="Carninci P."/>
            <person name="Kasukawa T."/>
            <person name="Katayama S."/>
            <person name="Gough J."/>
            <person name="Frith M.C."/>
            <person name="Maeda N."/>
            <person name="Oyama R."/>
            <person name="Ravasi T."/>
            <person name="Lenhard B."/>
            <person name="Wells C."/>
            <person name="Kodzius R."/>
            <person name="Shimokawa K."/>
            <person name="Bajic V.B."/>
            <person name="Brenner S.E."/>
            <person name="Batalov S."/>
            <person name="Forrest A.R."/>
            <person name="Zavolan M."/>
            <person name="Davis M.J."/>
            <person name="Wilming L.G."/>
            <person name="Aidinis V."/>
            <person name="Allen J.E."/>
            <person name="Ambesi-Impiombato A."/>
            <person name="Apweiler R."/>
            <person name="Aturaliya R.N."/>
            <person name="Bailey T.L."/>
            <person name="Bansal M."/>
            <person name="Baxter L."/>
            <person name="Beisel K.W."/>
            <person name="Bersano T."/>
            <person name="Bono H."/>
            <person name="Chalk A.M."/>
            <person name="Chiu K.P."/>
            <person name="Choudhary V."/>
            <person name="Christoffels A."/>
            <person name="Clutterbuck D.R."/>
            <person name="Crowe M.L."/>
            <person name="Dalla E."/>
            <person name="Dalrymple B.P."/>
            <person name="de Bono B."/>
            <person name="Della Gatta G."/>
            <person name="di Bernardo D."/>
            <person name="Down T."/>
            <person name="Engstrom P."/>
            <person name="Fagiolini M."/>
            <person name="Faulkner G."/>
            <person name="Fletcher C.F."/>
            <person name="Fukushima T."/>
            <person name="Furuno M."/>
            <person name="Futaki S."/>
            <person name="Gariboldi M."/>
            <person name="Georgii-Hemming P."/>
            <person name="Gingeras T.R."/>
            <person name="Gojobori T."/>
            <person name="Green R.E."/>
            <person name="Gustincich S."/>
            <person name="Harbers M."/>
            <person name="Hayashi Y."/>
            <person name="Hensch T.K."/>
            <person name="Hirokawa N."/>
            <person name="Hill D."/>
            <person name="Huminiecki L."/>
            <person name="Iacono M."/>
            <person name="Ikeo K."/>
            <person name="Iwama A."/>
            <person name="Ishikawa T."/>
            <person name="Jakt M."/>
            <person name="Kanapin A."/>
            <person name="Katoh M."/>
            <person name="Kawasawa Y."/>
            <person name="Kelso J."/>
            <person name="Kitamura H."/>
            <person name="Kitano H."/>
            <person name="Kollias G."/>
            <person name="Krishnan S.P."/>
            <person name="Kruger A."/>
            <person name="Kummerfeld S.K."/>
            <person name="Kurochkin I.V."/>
            <person name="Lareau L.F."/>
            <person name="Lazarevic D."/>
            <person name="Lipovich L."/>
            <person name="Liu J."/>
            <person name="Liuni S."/>
            <person name="McWilliam S."/>
            <person name="Madan Babu M."/>
            <person name="Madera M."/>
            <person name="Marchionni L."/>
            <person name="Matsuda H."/>
            <person name="Matsuzawa S."/>
            <person name="Miki H."/>
            <person name="Mignone F."/>
            <person name="Miyake S."/>
            <person name="Morris K."/>
            <person name="Mottagui-Tabar S."/>
            <person name="Mulder N."/>
            <person name="Nakano N."/>
            <person name="Nakauchi H."/>
            <person name="Ng P."/>
            <person name="Nilsson R."/>
            <person name="Nishiguchi S."/>
            <person name="Nishikawa S."/>
            <person name="Nori F."/>
            <person name="Ohara O."/>
            <person name="Okazaki Y."/>
            <person name="Orlando V."/>
            <person name="Pang K.C."/>
            <person name="Pavan W.J."/>
            <person name="Pavesi G."/>
            <person name="Pesole G."/>
            <person name="Petrovsky N."/>
            <person name="Piazza S."/>
            <person name="Reed J."/>
            <person name="Reid J.F."/>
            <person name="Ring B.Z."/>
            <person name="Ringwald M."/>
            <person name="Rost B."/>
            <person name="Ruan Y."/>
            <person name="Salzberg S.L."/>
            <person name="Sandelin A."/>
            <person name="Schneider C."/>
            <person name="Schoenbach C."/>
            <person name="Sekiguchi K."/>
            <person name="Semple C.A."/>
            <person name="Seno S."/>
            <person name="Sessa L."/>
            <person name="Sheng Y."/>
            <person name="Shibata Y."/>
            <person name="Shimada H."/>
            <person name="Shimada K."/>
            <person name="Silva D."/>
            <person name="Sinclair B."/>
            <person name="Sperling S."/>
            <person name="Stupka E."/>
            <person name="Sugiura K."/>
            <person name="Sultana R."/>
            <person name="Takenaka Y."/>
            <person name="Taki K."/>
            <person name="Tammoja K."/>
            <person name="Tan S.L."/>
            <person name="Tang S."/>
            <person name="Taylor M.S."/>
            <person name="Tegner J."/>
            <person name="Teichmann S.A."/>
            <person name="Ueda H.R."/>
            <person name="van Nimwegen E."/>
            <person name="Verardo R."/>
            <person name="Wei C.L."/>
            <person name="Yagi K."/>
            <person name="Yamanishi H."/>
            <person name="Zabarovsky E."/>
            <person name="Zhu S."/>
            <person name="Zimmer A."/>
            <person name="Hide W."/>
            <person name="Bult C."/>
            <person name="Grimmond S.M."/>
            <person name="Teasdale R.D."/>
            <person name="Liu E.T."/>
            <person name="Brusic V."/>
            <person name="Quackenbush J."/>
            <person name="Wahlestedt C."/>
            <person name="Mattick J.S."/>
            <person name="Hume D.A."/>
            <person name="Kai C."/>
            <person name="Sasaki D."/>
            <person name="Tomaru Y."/>
            <person name="Fukuda S."/>
            <person name="Kanamori-Katayama M."/>
            <person name="Suzuki M."/>
            <person name="Aoki J."/>
            <person name="Arakawa T."/>
            <person name="Iida J."/>
            <person name="Imamura K."/>
            <person name="Itoh M."/>
            <person name="Kato T."/>
            <person name="Kawaji H."/>
            <person name="Kawagashira N."/>
            <person name="Kawashima T."/>
            <person name="Kojima M."/>
            <person name="Kondo S."/>
            <person name="Konno H."/>
            <person name="Nakano K."/>
            <person name="Ninomiya N."/>
            <person name="Nishio T."/>
            <person name="Okada M."/>
            <person name="Plessy C."/>
            <person name="Shibata K."/>
            <person name="Shiraki T."/>
            <person name="Suzuki S."/>
            <person name="Tagami M."/>
            <person name="Waki K."/>
            <person name="Watahiki A."/>
            <person name="Okamura-Oho Y."/>
            <person name="Suzuki H."/>
            <person name="Kawai J."/>
            <person name="Hayashizaki Y."/>
        </authorList>
    </citation>
    <scope>NUCLEOTIDE SEQUENCE [LARGE SCALE MRNA] (ISOFORMS 1 AND 2)</scope>
    <source>
        <strain>C57BL/6J</strain>
        <tissue>Embryonic liver</tissue>
        <tissue>Pancreas</tissue>
        <tissue>Thymus</tissue>
    </source>
</reference>
<reference key="4">
    <citation type="journal article" date="2004" name="Genome Res.">
        <title>The status, quality, and expansion of the NIH full-length cDNA project: the Mammalian Gene Collection (MGC).</title>
        <authorList>
            <consortium name="The MGC Project Team"/>
        </authorList>
    </citation>
    <scope>NUCLEOTIDE SEQUENCE [LARGE SCALE MRNA] (ISOFORM 2)</scope>
    <source>
        <strain>Czech II</strain>
        <tissue>Mammary gland</tissue>
    </source>
</reference>
<reference key="5">
    <citation type="journal article" date="2010" name="Cell">
        <title>A tissue-specific atlas of mouse protein phosphorylation and expression.</title>
        <authorList>
            <person name="Huttlin E.L."/>
            <person name="Jedrychowski M.P."/>
            <person name="Elias J.E."/>
            <person name="Goswami T."/>
            <person name="Rad R."/>
            <person name="Beausoleil S.A."/>
            <person name="Villen J."/>
            <person name="Haas W."/>
            <person name="Sowa M.E."/>
            <person name="Gygi S.P."/>
        </authorList>
    </citation>
    <scope>IDENTIFICATION BY MASS SPECTROMETRY [LARGE SCALE ANALYSIS]</scope>
    <source>
        <tissue>Brain</tissue>
        <tissue>Brown adipose tissue</tissue>
        <tissue>Kidney</tissue>
        <tissue>Liver</tissue>
        <tissue>Lung</tissue>
        <tissue>Pancreas</tissue>
        <tissue>Spleen</tissue>
        <tissue>Testis</tissue>
    </source>
</reference>
<reference key="6">
    <citation type="journal article" date="2013" name="Mol. Cell">
        <title>SIRT5-mediated lysine desuccinylation impacts diverse metabolic pathways.</title>
        <authorList>
            <person name="Park J."/>
            <person name="Chen Y."/>
            <person name="Tishkoff D.X."/>
            <person name="Peng C."/>
            <person name="Tan M."/>
            <person name="Dai L."/>
            <person name="Xie Z."/>
            <person name="Zhang Y."/>
            <person name="Zwaans B.M."/>
            <person name="Skinner M.E."/>
            <person name="Lombard D.B."/>
            <person name="Zhao Y."/>
        </authorList>
    </citation>
    <scope>ACETYLATION [LARGE SCALE ANALYSIS] AT LYS-158</scope>
    <scope>SUCCINYLATION [LARGE SCALE ANALYSIS] AT LYS-47 AND LYS-289</scope>
    <scope>IDENTIFICATION BY MASS SPECTROMETRY [LARGE SCALE ANALYSIS]</scope>
    <source>
        <tissue>Embryonic fibroblast</tissue>
    </source>
</reference>
<organism>
    <name type="scientific">Mus musculus</name>
    <name type="common">Mouse</name>
    <dbReference type="NCBI Taxonomy" id="10090"/>
    <lineage>
        <taxon>Eukaryota</taxon>
        <taxon>Metazoa</taxon>
        <taxon>Chordata</taxon>
        <taxon>Craniata</taxon>
        <taxon>Vertebrata</taxon>
        <taxon>Euteleostomi</taxon>
        <taxon>Mammalia</taxon>
        <taxon>Eutheria</taxon>
        <taxon>Euarchontoglires</taxon>
        <taxon>Glires</taxon>
        <taxon>Rodentia</taxon>
        <taxon>Myomorpha</taxon>
        <taxon>Muroidea</taxon>
        <taxon>Muridae</taxon>
        <taxon>Murinae</taxon>
        <taxon>Mus</taxon>
        <taxon>Mus</taxon>
    </lineage>
</organism>
<proteinExistence type="evidence at protein level"/>
<keyword id="KW-0002">3D-structure</keyword>
<keyword id="KW-0007">Acetylation</keyword>
<keyword id="KW-0025">Alternative splicing</keyword>
<keyword id="KW-0963">Cytoplasm</keyword>
<keyword id="KW-0227">DNA damage</keyword>
<keyword id="KW-0233">DNA recombination</keyword>
<keyword id="KW-0234">DNA repair</keyword>
<keyword id="KW-0378">Hydrolase</keyword>
<keyword id="KW-0539">Nucleus</keyword>
<keyword id="KW-0645">Protease</keyword>
<keyword id="KW-0647">Proteasome</keyword>
<keyword id="KW-1185">Reference proteome</keyword>
<keyword id="KW-0788">Thiol protease</keyword>
<keyword id="KW-0804">Transcription</keyword>
<keyword id="KW-0805">Transcription regulation</keyword>
<keyword id="KW-0833">Ubl conjugation pathway</keyword>